<keyword id="KW-0012">Acyltransferase</keyword>
<keyword id="KW-0256">Endoplasmic reticulum</keyword>
<keyword id="KW-0444">Lipid biosynthesis</keyword>
<keyword id="KW-0443">Lipid metabolism</keyword>
<keyword id="KW-0472">Membrane</keyword>
<keyword id="KW-0594">Phospholipid biosynthesis</keyword>
<keyword id="KW-1208">Phospholipid metabolism</keyword>
<keyword id="KW-1267">Proteomics identification</keyword>
<keyword id="KW-1185">Reference proteome</keyword>
<keyword id="KW-0808">Transferase</keyword>
<keyword id="KW-0812">Transmembrane</keyword>
<keyword id="KW-1133">Transmembrane helix</keyword>
<evidence type="ECO:0000250" key="1"/>
<evidence type="ECO:0000250" key="2">
    <source>
        <dbReference type="UniProtKB" id="Q8R3I2"/>
    </source>
</evidence>
<evidence type="ECO:0000255" key="3"/>
<evidence type="ECO:0000269" key="4">
    <source>
    </source>
</evidence>
<evidence type="ECO:0000305" key="5"/>
<evidence type="ECO:0000312" key="6">
    <source>
        <dbReference type="HGNC" id="HGNC:25193"/>
    </source>
</evidence>
<proteinExistence type="evidence at protein level"/>
<protein>
    <recommendedName>
        <fullName evidence="6">Membrane-bound glycerophospholipid O-acyltransferase 2</fullName>
        <ecNumber evidence="4">2.3.1.-</ecNumber>
    </recommendedName>
    <alternativeName>
        <fullName evidence="5">1-acylglycerophosphate O-acyltransferase MBOAT2</fullName>
        <ecNumber evidence="4">2.3.1.51</ecNumber>
    </alternativeName>
    <alternativeName>
        <fullName evidence="5">1-acylglycerophosphocholine O-acyltransferase MBOAT2</fullName>
        <ecNumber evidence="4">2.3.1.23</ecNumber>
    </alternativeName>
    <alternativeName>
        <fullName evidence="5">1-acylglycerophosphoethanolamine MBOAT2 O-acyltransferase</fullName>
        <ecNumber evidence="4">2.3.1.n7</ecNumber>
    </alternativeName>
    <alternativeName>
        <fullName>Lysophosphatidic acid acyltransferase</fullName>
        <shortName>LPAAT</shortName>
        <shortName>Lyso-PA acyltransferase</shortName>
    </alternativeName>
    <alternativeName>
        <fullName>Lysophosphatidylcholine acyltransferase</fullName>
        <shortName>LPCAT</shortName>
        <shortName>Lyso-PC acyltransferase</shortName>
    </alternativeName>
    <alternativeName>
        <fullName>Lysophosphatidylcholine acyltransferase 4</fullName>
        <shortName>Lyso-PC acyltransferase 4</shortName>
    </alternativeName>
    <alternativeName>
        <fullName>Lysophosphatidylethanolamine acyltransferase</fullName>
        <shortName>LPEAT</shortName>
        <shortName>Lyso-PE acyltransferase</shortName>
    </alternativeName>
    <alternativeName>
        <fullName evidence="5">Lysophospholipid acyltransferase 2</fullName>
        <shortName>LPLAT 2</shortName>
    </alternativeName>
    <alternativeName>
        <fullName>Membrane-bound O-acyltransferase domain-containing protein 2</fullName>
        <shortName>O-acyltransferase domain-containing protein 2</shortName>
    </alternativeName>
</protein>
<organism>
    <name type="scientific">Homo sapiens</name>
    <name type="common">Human</name>
    <dbReference type="NCBI Taxonomy" id="9606"/>
    <lineage>
        <taxon>Eukaryota</taxon>
        <taxon>Metazoa</taxon>
        <taxon>Chordata</taxon>
        <taxon>Craniata</taxon>
        <taxon>Vertebrata</taxon>
        <taxon>Euteleostomi</taxon>
        <taxon>Mammalia</taxon>
        <taxon>Eutheria</taxon>
        <taxon>Euarchontoglires</taxon>
        <taxon>Primates</taxon>
        <taxon>Haplorrhini</taxon>
        <taxon>Catarrhini</taxon>
        <taxon>Hominidae</taxon>
        <taxon>Homo</taxon>
    </lineage>
</organism>
<comment type="function">
    <text evidence="2 4">Acyltransferase which catalyzes the transfer of an acyl group from an acyl-CoA to a lysophospholipid leading to the production of a phospholipid and participates in the reacylation step of the phospholipid remodeling pathway also known as the Lands cycle (PubMed:18772128). Catalyzes preferentially the acylation of lysophosphatidylethanolamine (1-acyl-sn-glycero-3-phosphoethanolamine or LPE) and lysophosphatidic acid (LPA) and to a lesser extend lysophosphatidylcholine (LPC) and lysophosphatidylserine (LPS) (PubMed:18772128). Prefers oleoyl-CoA as the acyl donor (PubMed:18772128). May be involved in chondrocyte differentiation (By similarity).</text>
</comment>
<comment type="catalytic activity">
    <reaction evidence="4">
        <text>a 1-acyl-sn-glycero-3-phosphocholine + an acyl-CoA = a 1,2-diacyl-sn-glycero-3-phosphocholine + CoA</text>
        <dbReference type="Rhea" id="RHEA:12937"/>
        <dbReference type="ChEBI" id="CHEBI:57287"/>
        <dbReference type="ChEBI" id="CHEBI:57643"/>
        <dbReference type="ChEBI" id="CHEBI:58168"/>
        <dbReference type="ChEBI" id="CHEBI:58342"/>
        <dbReference type="EC" id="2.3.1.23"/>
    </reaction>
    <physiologicalReaction direction="left-to-right" evidence="4">
        <dbReference type="Rhea" id="RHEA:12938"/>
    </physiologicalReaction>
</comment>
<comment type="catalytic activity">
    <reaction evidence="4">
        <text>a 1-acyl-sn-glycero-3-phosphoethanolamine + an acyl-CoA = a 1,2-diacyl-sn-glycero-3-phosphoethanolamine + CoA</text>
        <dbReference type="Rhea" id="RHEA:32995"/>
        <dbReference type="ChEBI" id="CHEBI:57287"/>
        <dbReference type="ChEBI" id="CHEBI:58342"/>
        <dbReference type="ChEBI" id="CHEBI:64381"/>
        <dbReference type="ChEBI" id="CHEBI:64612"/>
        <dbReference type="EC" id="2.3.1.n7"/>
    </reaction>
    <physiologicalReaction direction="left-to-right" evidence="4">
        <dbReference type="Rhea" id="RHEA:32996"/>
    </physiologicalReaction>
</comment>
<comment type="catalytic activity">
    <reaction evidence="4">
        <text>a 1-acyl-sn-glycero-3-phosphate + an acyl-CoA = a 1,2-diacyl-sn-glycero-3-phosphate + CoA</text>
        <dbReference type="Rhea" id="RHEA:19709"/>
        <dbReference type="ChEBI" id="CHEBI:57287"/>
        <dbReference type="ChEBI" id="CHEBI:57970"/>
        <dbReference type="ChEBI" id="CHEBI:58342"/>
        <dbReference type="ChEBI" id="CHEBI:58608"/>
        <dbReference type="EC" id="2.3.1.51"/>
    </reaction>
    <physiologicalReaction direction="left-to-right" evidence="4">
        <dbReference type="Rhea" id="RHEA:19710"/>
    </physiologicalReaction>
</comment>
<comment type="catalytic activity">
    <reaction evidence="4">
        <text>(9Z)-hexadecenoyl-CoA + 1-hexadecanoyl-sn-glycero-3-phosphocholine = 1-hexadecanoyl-2-(9Z-hexadecenoyl)-sn-glycero-3-phosphocholine + CoA</text>
        <dbReference type="Rhea" id="RHEA:37207"/>
        <dbReference type="ChEBI" id="CHEBI:57287"/>
        <dbReference type="ChEBI" id="CHEBI:61540"/>
        <dbReference type="ChEBI" id="CHEBI:72998"/>
        <dbReference type="ChEBI" id="CHEBI:74000"/>
    </reaction>
    <physiologicalReaction direction="left-to-right" evidence="4">
        <dbReference type="Rhea" id="RHEA:37208"/>
    </physiologicalReaction>
</comment>
<comment type="catalytic activity">
    <reaction evidence="4">
        <text>1-hexadecanoyl-sn-glycero-3-phosphoethanolamine + (9Z)-octadecenoyl-CoA = 1-hexadecanoyl-2-(9Z-octadecenoyl)-sn-glycero-3-phosphoethanolamine + CoA</text>
        <dbReference type="Rhea" id="RHEA:36015"/>
        <dbReference type="ChEBI" id="CHEBI:57287"/>
        <dbReference type="ChEBI" id="CHEBI:57387"/>
        <dbReference type="ChEBI" id="CHEBI:73004"/>
        <dbReference type="ChEBI" id="CHEBI:73007"/>
    </reaction>
    <physiologicalReaction direction="left-to-right" evidence="4">
        <dbReference type="Rhea" id="RHEA:36016"/>
    </physiologicalReaction>
</comment>
<comment type="catalytic activity">
    <reaction evidence="4">
        <text>1-hexadecanoyl-sn-glycero-3-phosphoethanolamine + (9Z)-hexadecenoyl-CoA = 1-hexadecanoyl-2-(9Z)-hexadecenoyl-sn-glycero-3-phosphoethanolamine + CoA</text>
        <dbReference type="Rhea" id="RHEA:37419"/>
        <dbReference type="ChEBI" id="CHEBI:57287"/>
        <dbReference type="ChEBI" id="CHEBI:61540"/>
        <dbReference type="ChEBI" id="CHEBI:73004"/>
        <dbReference type="ChEBI" id="CHEBI:73999"/>
    </reaction>
    <physiologicalReaction direction="left-to-right" evidence="4">
        <dbReference type="Rhea" id="RHEA:37420"/>
    </physiologicalReaction>
</comment>
<comment type="catalytic activity">
    <reaction evidence="4">
        <text>1-(9Z-octadecenoyl)-sn-glycero-3-phospho-L-serine + hexadecanoyl-CoA = 1-(9Z)-octadecenoyl-2-hexadecanoyl-sn-glycero-3-phosphoserine + CoA</text>
        <dbReference type="Rhea" id="RHEA:37415"/>
        <dbReference type="ChEBI" id="CHEBI:57287"/>
        <dbReference type="ChEBI" id="CHEBI:57379"/>
        <dbReference type="ChEBI" id="CHEBI:74617"/>
        <dbReference type="ChEBI" id="CHEBI:74909"/>
    </reaction>
    <physiologicalReaction direction="left-to-right" evidence="4">
        <dbReference type="Rhea" id="RHEA:37416"/>
    </physiologicalReaction>
</comment>
<comment type="catalytic activity">
    <reaction evidence="4">
        <text>(9Z,12Z)-octadecadienoyl-CoA + 1-hexadecanoyl-sn-glycero-3-phosphocholine = 1-hexadecanoyl-2-(9Z,12Z-octadecadienoyl)-sn-glycero-3-phosphocholine + CoA</text>
        <dbReference type="Rhea" id="RHEA:35995"/>
        <dbReference type="ChEBI" id="CHEBI:57287"/>
        <dbReference type="ChEBI" id="CHEBI:57383"/>
        <dbReference type="ChEBI" id="CHEBI:72998"/>
        <dbReference type="ChEBI" id="CHEBI:73002"/>
    </reaction>
    <physiologicalReaction direction="left-to-right" evidence="4">
        <dbReference type="Rhea" id="RHEA:35996"/>
    </physiologicalReaction>
</comment>
<comment type="catalytic activity">
    <reaction evidence="4">
        <text>1-hexadecanoyl-sn-glycero-3-phosphocholine + (9Z)-octadecenoyl-CoA = 1-hexadecanoyl-2-(9Z-octadecenoyl)-sn-glycero-3-phosphocholine + CoA</text>
        <dbReference type="Rhea" id="RHEA:35991"/>
        <dbReference type="ChEBI" id="CHEBI:57287"/>
        <dbReference type="ChEBI" id="CHEBI:57387"/>
        <dbReference type="ChEBI" id="CHEBI:72998"/>
        <dbReference type="ChEBI" id="CHEBI:73001"/>
    </reaction>
    <physiologicalReaction direction="left-to-right" evidence="4">
        <dbReference type="Rhea" id="RHEA:35992"/>
    </physiologicalReaction>
</comment>
<comment type="catalytic activity">
    <reaction evidence="4">
        <text>1-hexadecanoyl-sn-glycero-3-phosphate + (9Z)-hexadecenoyl-CoA = 1-hexadecanoyl-2-[(9Z)-hexadec-9-enoyl]-sn-glycero-3-phosphate + CoA</text>
        <dbReference type="Rhea" id="RHEA:37223"/>
        <dbReference type="ChEBI" id="CHEBI:57287"/>
        <dbReference type="ChEBI" id="CHEBI:57518"/>
        <dbReference type="ChEBI" id="CHEBI:61540"/>
        <dbReference type="ChEBI" id="CHEBI:73998"/>
    </reaction>
    <physiologicalReaction direction="left-to-right" evidence="4">
        <dbReference type="Rhea" id="RHEA:37224"/>
    </physiologicalReaction>
</comment>
<comment type="catalytic activity">
    <reaction evidence="4">
        <text>1-hexadecanoyl-sn-glycero-3-phosphate + (9Z)-octadecenoyl-CoA = 1-hexadecanoyl-2-(9Z-octadecenoyl)-sn-glycero-3-phosphate + CoA</text>
        <dbReference type="Rhea" id="RHEA:33187"/>
        <dbReference type="ChEBI" id="CHEBI:57287"/>
        <dbReference type="ChEBI" id="CHEBI:57387"/>
        <dbReference type="ChEBI" id="CHEBI:57518"/>
        <dbReference type="ChEBI" id="CHEBI:64839"/>
    </reaction>
    <physiologicalReaction direction="left-to-right" evidence="4">
        <dbReference type="Rhea" id="RHEA:33188"/>
    </physiologicalReaction>
</comment>
<comment type="catalytic activity">
    <reaction evidence="2">
        <text>a 1-O-(1Z-alkenyl)-sn-glycero-3-phosphocholine + (9Z)-octadecenoyl-CoA = 1-O-(1Z)-alkenyl-2-(9Z)-octadecenoyl-sn-glycero-3-phosphocholine + CoA</text>
        <dbReference type="Rhea" id="RHEA:37627"/>
        <dbReference type="ChEBI" id="CHEBI:57287"/>
        <dbReference type="ChEBI" id="CHEBI:57387"/>
        <dbReference type="ChEBI" id="CHEBI:77287"/>
        <dbReference type="ChEBI" id="CHEBI:77294"/>
    </reaction>
    <physiologicalReaction direction="left-to-right" evidence="2">
        <dbReference type="Rhea" id="RHEA:37628"/>
    </physiologicalReaction>
</comment>
<comment type="catalytic activity">
    <reaction evidence="2">
        <text>a 1-O-(1Z-alkenyl)-sn-glycero-3-phosphoethanolamine + (9Z)-octadecenoyl-CoA = 1-O-(1Z)-alkenyl-2-(9Z)-octadecenoyl-sn-glycero-3-phosphoethanolamine + CoA</text>
        <dbReference type="Rhea" id="RHEA:37631"/>
        <dbReference type="ChEBI" id="CHEBI:57287"/>
        <dbReference type="ChEBI" id="CHEBI:57387"/>
        <dbReference type="ChEBI" id="CHEBI:77288"/>
        <dbReference type="ChEBI" id="CHEBI:77291"/>
    </reaction>
    <physiologicalReaction direction="left-to-right" evidence="2">
        <dbReference type="Rhea" id="RHEA:37632"/>
    </physiologicalReaction>
</comment>
<comment type="catalytic activity">
    <reaction evidence="2">
        <text>1-octadecanoyl-sn-glycero-3-phosphoethanolamine + (9Z)-octadecenoyl-CoA = 1-octadecanoyl-2-(9Z-octadecenoyl)-sn-glycero-3-phosphoethanolamine + CoA</text>
        <dbReference type="Rhea" id="RHEA:37523"/>
        <dbReference type="ChEBI" id="CHEBI:57287"/>
        <dbReference type="ChEBI" id="CHEBI:57387"/>
        <dbReference type="ChEBI" id="CHEBI:75036"/>
        <dbReference type="ChEBI" id="CHEBI:75038"/>
    </reaction>
    <physiologicalReaction direction="left-to-right" evidence="2">
        <dbReference type="Rhea" id="RHEA:37524"/>
    </physiologicalReaction>
</comment>
<comment type="catalytic activity">
    <reaction evidence="2">
        <text>1-octadecanoyl-sn-glycero-3-phosphocholine + (9Z)-octadecenoyl-CoA = 1-octadecanoyl-2-(9Z-octadecenoyl)-sn-glycero-3-phosphocholine + CoA</text>
        <dbReference type="Rhea" id="RHEA:37519"/>
        <dbReference type="ChEBI" id="CHEBI:57287"/>
        <dbReference type="ChEBI" id="CHEBI:57387"/>
        <dbReference type="ChEBI" id="CHEBI:73858"/>
        <dbReference type="ChEBI" id="CHEBI:75034"/>
    </reaction>
    <physiologicalReaction direction="left-to-right" evidence="2">
        <dbReference type="Rhea" id="RHEA:37520"/>
    </physiologicalReaction>
</comment>
<comment type="catalytic activity">
    <reaction evidence="2">
        <text>1-(9Z-octadecenoyl)-sn-glycero-3-phosphoethanolamine + (9Z)-octadecenoyl-CoA = 1,2-di-(9Z-octadecenoyl)-sn-glycero-3-phosphoethanolamine + CoA</text>
        <dbReference type="Rhea" id="RHEA:37499"/>
        <dbReference type="ChEBI" id="CHEBI:57287"/>
        <dbReference type="ChEBI" id="CHEBI:57387"/>
        <dbReference type="ChEBI" id="CHEBI:74971"/>
        <dbReference type="ChEBI" id="CHEBI:74986"/>
    </reaction>
    <physiologicalReaction direction="left-to-right" evidence="2">
        <dbReference type="Rhea" id="RHEA:37500"/>
    </physiologicalReaction>
</comment>
<comment type="activity regulation">
    <text evidence="4">Partially inhibited by thimerosal.</text>
</comment>
<comment type="pathway">
    <text evidence="4">Lipid metabolism; phospholipid metabolism.</text>
</comment>
<comment type="subcellular location">
    <subcellularLocation>
        <location evidence="2">Endoplasmic reticulum membrane</location>
        <topology evidence="3">Multi-pass membrane protein</topology>
    </subcellularLocation>
</comment>
<comment type="tissue specificity">
    <text evidence="4">Expressed in neutrophils.</text>
</comment>
<comment type="similarity">
    <text evidence="5">Belongs to the membrane-bound acyltransferase family.</text>
</comment>
<comment type="sequence caution" evidence="5">
    <conflict type="erroneous initiation">
        <sequence resource="EMBL-CDS" id="BAC11204"/>
    </conflict>
</comment>
<name>MBOA2_HUMAN</name>
<reference key="1">
    <citation type="journal article" date="2007" name="J. Biol. Chem.">
        <title>LPT1 encodes a membrane-bound O-acyltransferase involved in the acylation of lysophospholipids in the yeast Saccharomyces cerevisiae.</title>
        <authorList>
            <person name="Tamaki H."/>
            <person name="Shimada A."/>
            <person name="Itoh Y."/>
            <person name="Ohya M."/>
            <person name="Takase J."/>
            <person name="Miyashita M."/>
            <person name="Miyagawa H."/>
            <person name="Nozaki H."/>
            <person name="Nakayama R."/>
            <person name="Kumagai H."/>
        </authorList>
    </citation>
    <scope>NUCLEOTIDE SEQUENCE [MRNA]</scope>
</reference>
<reference key="2">
    <citation type="journal article" date="2004" name="Nat. Genet.">
        <title>Complete sequencing and characterization of 21,243 full-length human cDNAs.</title>
        <authorList>
            <person name="Ota T."/>
            <person name="Suzuki Y."/>
            <person name="Nishikawa T."/>
            <person name="Otsuki T."/>
            <person name="Sugiyama T."/>
            <person name="Irie R."/>
            <person name="Wakamatsu A."/>
            <person name="Hayashi K."/>
            <person name="Sato H."/>
            <person name="Nagai K."/>
            <person name="Kimura K."/>
            <person name="Makita H."/>
            <person name="Sekine M."/>
            <person name="Obayashi M."/>
            <person name="Nishi T."/>
            <person name="Shibahara T."/>
            <person name="Tanaka T."/>
            <person name="Ishii S."/>
            <person name="Yamamoto J."/>
            <person name="Saito K."/>
            <person name="Kawai Y."/>
            <person name="Isono Y."/>
            <person name="Nakamura Y."/>
            <person name="Nagahari K."/>
            <person name="Murakami K."/>
            <person name="Yasuda T."/>
            <person name="Iwayanagi T."/>
            <person name="Wagatsuma M."/>
            <person name="Shiratori A."/>
            <person name="Sudo H."/>
            <person name="Hosoiri T."/>
            <person name="Kaku Y."/>
            <person name="Kodaira H."/>
            <person name="Kondo H."/>
            <person name="Sugawara M."/>
            <person name="Takahashi M."/>
            <person name="Kanda K."/>
            <person name="Yokoi T."/>
            <person name="Furuya T."/>
            <person name="Kikkawa E."/>
            <person name="Omura Y."/>
            <person name="Abe K."/>
            <person name="Kamihara K."/>
            <person name="Katsuta N."/>
            <person name="Sato K."/>
            <person name="Tanikawa M."/>
            <person name="Yamazaki M."/>
            <person name="Ninomiya K."/>
            <person name="Ishibashi T."/>
            <person name="Yamashita H."/>
            <person name="Murakawa K."/>
            <person name="Fujimori K."/>
            <person name="Tanai H."/>
            <person name="Kimata M."/>
            <person name="Watanabe M."/>
            <person name="Hiraoka S."/>
            <person name="Chiba Y."/>
            <person name="Ishida S."/>
            <person name="Ono Y."/>
            <person name="Takiguchi S."/>
            <person name="Watanabe S."/>
            <person name="Yosida M."/>
            <person name="Hotuta T."/>
            <person name="Kusano J."/>
            <person name="Kanehori K."/>
            <person name="Takahashi-Fujii A."/>
            <person name="Hara H."/>
            <person name="Tanase T.-O."/>
            <person name="Nomura Y."/>
            <person name="Togiya S."/>
            <person name="Komai F."/>
            <person name="Hara R."/>
            <person name="Takeuchi K."/>
            <person name="Arita M."/>
            <person name="Imose N."/>
            <person name="Musashino K."/>
            <person name="Yuuki H."/>
            <person name="Oshima A."/>
            <person name="Sasaki N."/>
            <person name="Aotsuka S."/>
            <person name="Yoshikawa Y."/>
            <person name="Matsunawa H."/>
            <person name="Ichihara T."/>
            <person name="Shiohata N."/>
            <person name="Sano S."/>
            <person name="Moriya S."/>
            <person name="Momiyama H."/>
            <person name="Satoh N."/>
            <person name="Takami S."/>
            <person name="Terashima Y."/>
            <person name="Suzuki O."/>
            <person name="Nakagawa S."/>
            <person name="Senoh A."/>
            <person name="Mizoguchi H."/>
            <person name="Goto Y."/>
            <person name="Shimizu F."/>
            <person name="Wakebe H."/>
            <person name="Hishigaki H."/>
            <person name="Watanabe T."/>
            <person name="Sugiyama A."/>
            <person name="Takemoto M."/>
            <person name="Kawakami B."/>
            <person name="Yamazaki M."/>
            <person name="Watanabe K."/>
            <person name="Kumagai A."/>
            <person name="Itakura S."/>
            <person name="Fukuzumi Y."/>
            <person name="Fujimori Y."/>
            <person name="Komiyama M."/>
            <person name="Tashiro H."/>
            <person name="Tanigami A."/>
            <person name="Fujiwara T."/>
            <person name="Ono T."/>
            <person name="Yamada K."/>
            <person name="Fujii Y."/>
            <person name="Ozaki K."/>
            <person name="Hirao M."/>
            <person name="Ohmori Y."/>
            <person name="Kawabata A."/>
            <person name="Hikiji T."/>
            <person name="Kobatake N."/>
            <person name="Inagaki H."/>
            <person name="Ikema Y."/>
            <person name="Okamoto S."/>
            <person name="Okitani R."/>
            <person name="Kawakami T."/>
            <person name="Noguchi S."/>
            <person name="Itoh T."/>
            <person name="Shigeta K."/>
            <person name="Senba T."/>
            <person name="Matsumura K."/>
            <person name="Nakajima Y."/>
            <person name="Mizuno T."/>
            <person name="Morinaga M."/>
            <person name="Sasaki M."/>
            <person name="Togashi T."/>
            <person name="Oyama M."/>
            <person name="Hata H."/>
            <person name="Watanabe M."/>
            <person name="Komatsu T."/>
            <person name="Mizushima-Sugano J."/>
            <person name="Satoh T."/>
            <person name="Shirai Y."/>
            <person name="Takahashi Y."/>
            <person name="Nakagawa K."/>
            <person name="Okumura K."/>
            <person name="Nagase T."/>
            <person name="Nomura N."/>
            <person name="Kikuchi H."/>
            <person name="Masuho Y."/>
            <person name="Yamashita R."/>
            <person name="Nakai K."/>
            <person name="Yada T."/>
            <person name="Nakamura Y."/>
            <person name="Ohara O."/>
            <person name="Isogai T."/>
            <person name="Sugano S."/>
        </authorList>
    </citation>
    <scope>NUCLEOTIDE SEQUENCE [LARGE SCALE MRNA]</scope>
    <source>
        <tissue>Embryo</tissue>
    </source>
</reference>
<reference key="3">
    <citation type="journal article" date="2005" name="Nature">
        <title>Generation and annotation of the DNA sequences of human chromosomes 2 and 4.</title>
        <authorList>
            <person name="Hillier L.W."/>
            <person name="Graves T.A."/>
            <person name="Fulton R.S."/>
            <person name="Fulton L.A."/>
            <person name="Pepin K.H."/>
            <person name="Minx P."/>
            <person name="Wagner-McPherson C."/>
            <person name="Layman D."/>
            <person name="Wylie K."/>
            <person name="Sekhon M."/>
            <person name="Becker M.C."/>
            <person name="Fewell G.A."/>
            <person name="Delehaunty K.D."/>
            <person name="Miner T.L."/>
            <person name="Nash W.E."/>
            <person name="Kremitzki C."/>
            <person name="Oddy L."/>
            <person name="Du H."/>
            <person name="Sun H."/>
            <person name="Bradshaw-Cordum H."/>
            <person name="Ali J."/>
            <person name="Carter J."/>
            <person name="Cordes M."/>
            <person name="Harris A."/>
            <person name="Isak A."/>
            <person name="van Brunt A."/>
            <person name="Nguyen C."/>
            <person name="Du F."/>
            <person name="Courtney L."/>
            <person name="Kalicki J."/>
            <person name="Ozersky P."/>
            <person name="Abbott S."/>
            <person name="Armstrong J."/>
            <person name="Belter E.A."/>
            <person name="Caruso L."/>
            <person name="Cedroni M."/>
            <person name="Cotton M."/>
            <person name="Davidson T."/>
            <person name="Desai A."/>
            <person name="Elliott G."/>
            <person name="Erb T."/>
            <person name="Fronick C."/>
            <person name="Gaige T."/>
            <person name="Haakenson W."/>
            <person name="Haglund K."/>
            <person name="Holmes A."/>
            <person name="Harkins R."/>
            <person name="Kim K."/>
            <person name="Kruchowski S.S."/>
            <person name="Strong C.M."/>
            <person name="Grewal N."/>
            <person name="Goyea E."/>
            <person name="Hou S."/>
            <person name="Levy A."/>
            <person name="Martinka S."/>
            <person name="Mead K."/>
            <person name="McLellan M.D."/>
            <person name="Meyer R."/>
            <person name="Randall-Maher J."/>
            <person name="Tomlinson C."/>
            <person name="Dauphin-Kohlberg S."/>
            <person name="Kozlowicz-Reilly A."/>
            <person name="Shah N."/>
            <person name="Swearengen-Shahid S."/>
            <person name="Snider J."/>
            <person name="Strong J.T."/>
            <person name="Thompson J."/>
            <person name="Yoakum M."/>
            <person name="Leonard S."/>
            <person name="Pearman C."/>
            <person name="Trani L."/>
            <person name="Radionenko M."/>
            <person name="Waligorski J.E."/>
            <person name="Wang C."/>
            <person name="Rock S.M."/>
            <person name="Tin-Wollam A.-M."/>
            <person name="Maupin R."/>
            <person name="Latreille P."/>
            <person name="Wendl M.C."/>
            <person name="Yang S.-P."/>
            <person name="Pohl C."/>
            <person name="Wallis J.W."/>
            <person name="Spieth J."/>
            <person name="Bieri T.A."/>
            <person name="Berkowicz N."/>
            <person name="Nelson J.O."/>
            <person name="Osborne J."/>
            <person name="Ding L."/>
            <person name="Meyer R."/>
            <person name="Sabo A."/>
            <person name="Shotland Y."/>
            <person name="Sinha P."/>
            <person name="Wohldmann P.E."/>
            <person name="Cook L.L."/>
            <person name="Hickenbotham M.T."/>
            <person name="Eldred J."/>
            <person name="Williams D."/>
            <person name="Jones T.A."/>
            <person name="She X."/>
            <person name="Ciccarelli F.D."/>
            <person name="Izaurralde E."/>
            <person name="Taylor J."/>
            <person name="Schmutz J."/>
            <person name="Myers R.M."/>
            <person name="Cox D.R."/>
            <person name="Huang X."/>
            <person name="McPherson J.D."/>
            <person name="Mardis E.R."/>
            <person name="Clifton S.W."/>
            <person name="Warren W.C."/>
            <person name="Chinwalla A.T."/>
            <person name="Eddy S.R."/>
            <person name="Marra M.A."/>
            <person name="Ovcharenko I."/>
            <person name="Furey T.S."/>
            <person name="Miller W."/>
            <person name="Eichler E.E."/>
            <person name="Bork P."/>
            <person name="Suyama M."/>
            <person name="Torrents D."/>
            <person name="Waterston R.H."/>
            <person name="Wilson R.K."/>
        </authorList>
    </citation>
    <scope>NUCLEOTIDE SEQUENCE [LARGE SCALE GENOMIC DNA]</scope>
</reference>
<reference key="4">
    <citation type="journal article" date="2004" name="Genome Res.">
        <title>The status, quality, and expansion of the NIH full-length cDNA project: the Mammalian Gene Collection (MGC).</title>
        <authorList>
            <consortium name="The MGC Project Team"/>
        </authorList>
    </citation>
    <scope>NUCLEOTIDE SEQUENCE [LARGE SCALE MRNA]</scope>
    <source>
        <tissue>Brain</tissue>
        <tissue>Lung</tissue>
        <tissue>Testis</tissue>
    </source>
</reference>
<reference key="5">
    <citation type="journal article" date="2005" name="DNA Res.">
        <title>Signal sequence and keyword trap in silico for selection of full-length human cDNAs encoding secretion or membrane proteins from oligo-capped cDNA libraries.</title>
        <authorList>
            <person name="Otsuki T."/>
            <person name="Ota T."/>
            <person name="Nishikawa T."/>
            <person name="Hayashi K."/>
            <person name="Suzuki Y."/>
            <person name="Yamamoto J."/>
            <person name="Wakamatsu A."/>
            <person name="Kimura K."/>
            <person name="Sakamoto K."/>
            <person name="Hatano N."/>
            <person name="Kawai Y."/>
            <person name="Ishii S."/>
            <person name="Saito K."/>
            <person name="Kojima S."/>
            <person name="Sugiyama T."/>
            <person name="Ono T."/>
            <person name="Okano K."/>
            <person name="Yoshikawa Y."/>
            <person name="Aotsuka S."/>
            <person name="Sasaki N."/>
            <person name="Hattori A."/>
            <person name="Okumura K."/>
            <person name="Nagai K."/>
            <person name="Sugano S."/>
            <person name="Isogai T."/>
        </authorList>
    </citation>
    <scope>NUCLEOTIDE SEQUENCE [LARGE SCALE MRNA] OF 349-520</scope>
    <source>
        <tissue>Teratocarcinoma</tissue>
    </source>
</reference>
<reference key="6">
    <citation type="journal article" date="2008" name="J. Biol. Chem.">
        <title>Lysophospholipid acyltransferases and arachidonate recycling in human neutrophils.</title>
        <authorList>
            <person name="Gijon M.A."/>
            <person name="Riekhof W.R."/>
            <person name="Zarini S."/>
            <person name="Murphy R.C."/>
            <person name="Voelker D.R."/>
        </authorList>
    </citation>
    <scope>FUNCTION</scope>
    <scope>TISSUE SPECIFICITY</scope>
    <scope>SUBSTRATE SPECIFICITY</scope>
    <scope>CATALYTIC ACTIVITY</scope>
    <scope>ACTIVITY REGULATION</scope>
</reference>
<gene>
    <name evidence="6" type="primary">MBOAT2</name>
    <name evidence="2" type="synonym">LPCAT4</name>
    <name type="synonym">OACT2</name>
</gene>
<feature type="chain" id="PRO_0000273020" description="Membrane-bound glycerophospholipid O-acyltransferase 2">
    <location>
        <begin position="1"/>
        <end position="520"/>
    </location>
</feature>
<feature type="transmembrane region" description="Helical" evidence="3">
    <location>
        <begin position="22"/>
        <end position="42"/>
    </location>
</feature>
<feature type="transmembrane region" description="Helical" evidence="3">
    <location>
        <begin position="61"/>
        <end position="81"/>
    </location>
</feature>
<feature type="transmembrane region" description="Helical" evidence="3">
    <location>
        <begin position="88"/>
        <end position="108"/>
    </location>
</feature>
<feature type="transmembrane region" description="Helical" evidence="3">
    <location>
        <begin position="184"/>
        <end position="204"/>
    </location>
</feature>
<feature type="transmembrane region" description="Helical" evidence="3">
    <location>
        <begin position="237"/>
        <end position="257"/>
    </location>
</feature>
<feature type="transmembrane region" description="Helical" evidence="3">
    <location>
        <begin position="264"/>
        <end position="284"/>
    </location>
</feature>
<feature type="transmembrane region" description="Helical" evidence="3">
    <location>
        <begin position="366"/>
        <end position="386"/>
    </location>
</feature>
<feature type="transmembrane region" description="Helical" evidence="3">
    <location>
        <begin position="416"/>
        <end position="436"/>
    </location>
</feature>
<feature type="transmembrane region" description="Helical" evidence="3">
    <location>
        <begin position="444"/>
        <end position="464"/>
    </location>
</feature>
<feature type="active site" evidence="1">
    <location>
        <position position="342"/>
    </location>
</feature>
<feature type="active site" evidence="1">
    <location>
        <position position="373"/>
    </location>
</feature>
<feature type="sequence variant" id="VAR_030068" description="In dbSNP:rs16866827.">
    <original>T</original>
    <variation>A</variation>
    <location>
        <position position="501"/>
    </location>
</feature>
<feature type="sequence conflict" description="In Ref. 5; BAC11204." evidence="5" ref="5">
    <original>H</original>
    <variation>R</variation>
    <location>
        <position position="402"/>
    </location>
</feature>
<feature type="sequence conflict" description="In Ref. 2; BAC85105." evidence="5" ref="2">
    <original>K</original>
    <variation>R</variation>
    <location>
        <position position="484"/>
    </location>
</feature>
<dbReference type="EC" id="2.3.1.-" evidence="4"/>
<dbReference type="EC" id="2.3.1.51" evidence="4"/>
<dbReference type="EC" id="2.3.1.23" evidence="4"/>
<dbReference type="EC" id="2.3.1.n7" evidence="4"/>
<dbReference type="EMBL" id="AB305044">
    <property type="protein sequence ID" value="BAF93900.1"/>
    <property type="molecule type" value="mRNA"/>
</dbReference>
<dbReference type="EMBL" id="AK027321">
    <property type="protein sequence ID" value="BAC85105.1"/>
    <property type="molecule type" value="mRNA"/>
</dbReference>
<dbReference type="EMBL" id="AC012495">
    <property type="status" value="NOT_ANNOTATED_CDS"/>
    <property type="molecule type" value="Genomic_DNA"/>
</dbReference>
<dbReference type="EMBL" id="AC112723">
    <property type="status" value="NOT_ANNOTATED_CDS"/>
    <property type="molecule type" value="Genomic_DNA"/>
</dbReference>
<dbReference type="EMBL" id="BC016005">
    <property type="protein sequence ID" value="AAH16005.1"/>
    <property type="molecule type" value="mRNA"/>
</dbReference>
<dbReference type="EMBL" id="BC146871">
    <property type="protein sequence ID" value="AAI46872.1"/>
    <property type="molecule type" value="mRNA"/>
</dbReference>
<dbReference type="EMBL" id="BC157827">
    <property type="protein sequence ID" value="AAI57828.1"/>
    <property type="molecule type" value="mRNA"/>
</dbReference>
<dbReference type="EMBL" id="AK074779">
    <property type="protein sequence ID" value="BAC11204.1"/>
    <property type="status" value="ALT_INIT"/>
    <property type="molecule type" value="mRNA"/>
</dbReference>
<dbReference type="CCDS" id="CCDS1660.1"/>
<dbReference type="RefSeq" id="NP_001308194.1">
    <property type="nucleotide sequence ID" value="NM_001321265.1"/>
</dbReference>
<dbReference type="RefSeq" id="NP_001308195.1">
    <property type="nucleotide sequence ID" value="NM_001321266.1"/>
</dbReference>
<dbReference type="RefSeq" id="NP_001308196.1">
    <property type="nucleotide sequence ID" value="NM_001321267.1"/>
</dbReference>
<dbReference type="RefSeq" id="NP_620154.2">
    <property type="nucleotide sequence ID" value="NM_138799.3"/>
</dbReference>
<dbReference type="SMR" id="Q6ZWT7"/>
<dbReference type="BioGRID" id="126201">
    <property type="interactions" value="31"/>
</dbReference>
<dbReference type="FunCoup" id="Q6ZWT7">
    <property type="interactions" value="1524"/>
</dbReference>
<dbReference type="IntAct" id="Q6ZWT7">
    <property type="interactions" value="6"/>
</dbReference>
<dbReference type="MINT" id="Q6ZWT7"/>
<dbReference type="STRING" id="9606.ENSP00000302177"/>
<dbReference type="SwissLipids" id="SLP:000000134"/>
<dbReference type="iPTMnet" id="Q6ZWT7"/>
<dbReference type="PhosphoSitePlus" id="Q6ZWT7"/>
<dbReference type="SwissPalm" id="Q6ZWT7"/>
<dbReference type="BioMuta" id="MBOAT2"/>
<dbReference type="DMDM" id="143811417"/>
<dbReference type="jPOST" id="Q6ZWT7"/>
<dbReference type="MassIVE" id="Q6ZWT7"/>
<dbReference type="PaxDb" id="9606-ENSP00000302177"/>
<dbReference type="PeptideAtlas" id="Q6ZWT7"/>
<dbReference type="ProteomicsDB" id="68497"/>
<dbReference type="Pumba" id="Q6ZWT7"/>
<dbReference type="Antibodypedia" id="12361">
    <property type="antibodies" value="73 antibodies from 18 providers"/>
</dbReference>
<dbReference type="DNASU" id="129642"/>
<dbReference type="Ensembl" id="ENST00000305997.8">
    <property type="protein sequence ID" value="ENSP00000302177.3"/>
    <property type="gene ID" value="ENSG00000143797.12"/>
</dbReference>
<dbReference type="GeneID" id="129642"/>
<dbReference type="KEGG" id="hsa:129642"/>
<dbReference type="MANE-Select" id="ENST00000305997.8">
    <property type="protein sequence ID" value="ENSP00000302177.3"/>
    <property type="RefSeq nucleotide sequence ID" value="NM_138799.4"/>
    <property type="RefSeq protein sequence ID" value="NP_620154.2"/>
</dbReference>
<dbReference type="UCSC" id="uc002qzg.2">
    <property type="organism name" value="human"/>
</dbReference>
<dbReference type="AGR" id="HGNC:25193"/>
<dbReference type="CTD" id="129642"/>
<dbReference type="DisGeNET" id="129642"/>
<dbReference type="GeneCards" id="MBOAT2"/>
<dbReference type="HGNC" id="HGNC:25193">
    <property type="gene designation" value="MBOAT2"/>
</dbReference>
<dbReference type="HPA" id="ENSG00000143797">
    <property type="expression patterns" value="Low tissue specificity"/>
</dbReference>
<dbReference type="MIM" id="611949">
    <property type="type" value="gene"/>
</dbReference>
<dbReference type="neXtProt" id="NX_Q6ZWT7"/>
<dbReference type="OpenTargets" id="ENSG00000143797"/>
<dbReference type="PharmGKB" id="PA134987740"/>
<dbReference type="VEuPathDB" id="HostDB:ENSG00000143797"/>
<dbReference type="eggNOG" id="KOG2704">
    <property type="taxonomic scope" value="Eukaryota"/>
</dbReference>
<dbReference type="GeneTree" id="ENSGT01030000234564"/>
<dbReference type="HOGENOM" id="CLU_011340_3_0_1"/>
<dbReference type="InParanoid" id="Q6ZWT7"/>
<dbReference type="OMA" id="WHGTRPG"/>
<dbReference type="OrthoDB" id="286734at2759"/>
<dbReference type="PAN-GO" id="Q6ZWT7">
    <property type="GO annotations" value="3 GO annotations based on evolutionary models"/>
</dbReference>
<dbReference type="PhylomeDB" id="Q6ZWT7"/>
<dbReference type="TreeFam" id="TF314906"/>
<dbReference type="BRENDA" id="2.3.1.23">
    <property type="organism ID" value="2681"/>
</dbReference>
<dbReference type="PathwayCommons" id="Q6ZWT7"/>
<dbReference type="Reactome" id="R-HSA-1482788">
    <property type="pathway name" value="Acyl chain remodelling of PC"/>
</dbReference>
<dbReference type="Reactome" id="R-HSA-1482839">
    <property type="pathway name" value="Acyl chain remodelling of PE"/>
</dbReference>
<dbReference type="SignaLink" id="Q6ZWT7"/>
<dbReference type="UniPathway" id="UPA00085"/>
<dbReference type="BioGRID-ORCS" id="129642">
    <property type="hits" value="32 hits in 1157 CRISPR screens"/>
</dbReference>
<dbReference type="ChiTaRS" id="MBOAT2">
    <property type="organism name" value="human"/>
</dbReference>
<dbReference type="GenomeRNAi" id="129642"/>
<dbReference type="Pharos" id="Q6ZWT7">
    <property type="development level" value="Tbio"/>
</dbReference>
<dbReference type="PRO" id="PR:Q6ZWT7"/>
<dbReference type="Proteomes" id="UP000005640">
    <property type="component" value="Chromosome 2"/>
</dbReference>
<dbReference type="RNAct" id="Q6ZWT7">
    <property type="molecule type" value="protein"/>
</dbReference>
<dbReference type="Bgee" id="ENSG00000143797">
    <property type="expression patterns" value="Expressed in corpus callosum and 202 other cell types or tissues"/>
</dbReference>
<dbReference type="ExpressionAtlas" id="Q6ZWT7">
    <property type="expression patterns" value="baseline and differential"/>
</dbReference>
<dbReference type="GO" id="GO:0005789">
    <property type="term" value="C:endoplasmic reticulum membrane"/>
    <property type="evidence" value="ECO:0000250"/>
    <property type="project" value="UniProtKB"/>
</dbReference>
<dbReference type="GO" id="GO:0016020">
    <property type="term" value="C:membrane"/>
    <property type="evidence" value="ECO:0000318"/>
    <property type="project" value="GO_Central"/>
</dbReference>
<dbReference type="GO" id="GO:0003841">
    <property type="term" value="F:1-acylglycerol-3-phosphate O-acyltransferase activity"/>
    <property type="evidence" value="ECO:0000304"/>
    <property type="project" value="Reactome"/>
</dbReference>
<dbReference type="GO" id="GO:0047184">
    <property type="term" value="F:1-acylglycerophosphocholine O-acyltransferase activity"/>
    <property type="evidence" value="ECO:0000314"/>
    <property type="project" value="UniProtKB"/>
</dbReference>
<dbReference type="GO" id="GO:0106262">
    <property type="term" value="F:1-acylglycerophosphoethanolamine O-acyltransferase activity"/>
    <property type="evidence" value="ECO:0000314"/>
    <property type="project" value="UniProtKB"/>
</dbReference>
<dbReference type="GO" id="GO:0106263">
    <property type="term" value="F:1-acylglycerophosphoserine O-acyltransferase activity"/>
    <property type="evidence" value="ECO:0000315"/>
    <property type="project" value="UniProtKB"/>
</dbReference>
<dbReference type="GO" id="GO:0047144">
    <property type="term" value="F:2-acylglycerol-3-phosphate O-acyltransferase activity"/>
    <property type="evidence" value="ECO:0000304"/>
    <property type="project" value="Reactome"/>
</dbReference>
<dbReference type="GO" id="GO:0016746">
    <property type="term" value="F:acyltransferase activity"/>
    <property type="evidence" value="ECO:0000318"/>
    <property type="project" value="GO_Central"/>
</dbReference>
<dbReference type="GO" id="GO:0030258">
    <property type="term" value="P:lipid modification"/>
    <property type="evidence" value="ECO:0000318"/>
    <property type="project" value="GO_Central"/>
</dbReference>
<dbReference type="GO" id="GO:0036151">
    <property type="term" value="P:phosphatidylcholine acyl-chain remodeling"/>
    <property type="evidence" value="ECO:0000314"/>
    <property type="project" value="UniProtKB"/>
</dbReference>
<dbReference type="GO" id="GO:0036152">
    <property type="term" value="P:phosphatidylethanolamine acyl-chain remodeling"/>
    <property type="evidence" value="ECO:0000314"/>
    <property type="project" value="UniProtKB"/>
</dbReference>
<dbReference type="GO" id="GO:0036150">
    <property type="term" value="P:phosphatidylserine acyl-chain remodeling"/>
    <property type="evidence" value="ECO:0000314"/>
    <property type="project" value="UniProtKB"/>
</dbReference>
<dbReference type="GO" id="GO:0008654">
    <property type="term" value="P:phospholipid biosynthetic process"/>
    <property type="evidence" value="ECO:0007669"/>
    <property type="project" value="UniProtKB-KW"/>
</dbReference>
<dbReference type="GO" id="GO:0032330">
    <property type="term" value="P:regulation of chondrocyte differentiation"/>
    <property type="evidence" value="ECO:0000250"/>
    <property type="project" value="UniProtKB"/>
</dbReference>
<dbReference type="InterPro" id="IPR049941">
    <property type="entry name" value="LPLAT_7/PORCN-like"/>
</dbReference>
<dbReference type="InterPro" id="IPR004299">
    <property type="entry name" value="MBOAT_fam"/>
</dbReference>
<dbReference type="PANTHER" id="PTHR13906:SF7">
    <property type="entry name" value="LYSOPHOSPHOLIPID ACYLTRANSFERASE 2"/>
    <property type="match status" value="1"/>
</dbReference>
<dbReference type="PANTHER" id="PTHR13906">
    <property type="entry name" value="PORCUPINE"/>
    <property type="match status" value="1"/>
</dbReference>
<dbReference type="Pfam" id="PF03062">
    <property type="entry name" value="MBOAT"/>
    <property type="match status" value="1"/>
</dbReference>
<accession>Q6ZWT7</accession>
<accession>A9EDR2</accession>
<accession>Q8NCE7</accession>
<accession>Q96KY4</accession>
<sequence>MATTSTTGSTLLQPLSNAVQLPIDQVNFVVCQLFALLAAIWFRTYLHSSKTSSFIRHVVATLLGLYLALFCFGWYALHFLVQSGISYCIMIIIGVENMHNYCFVFALGYLTVCQVTRVYIFDYGQYSADFSGPMMIITQKITSLACEIHDGMFRKDEELTSSQRDLAVRRMPSLLEYLSYNCNFMGILAGPLCSYKDYITFIEGRSYHITQSGENGKEETQYERTEPSPNTAVVQKLLVCGLSLLFHLTICTTLPVEYNIDEHFQATASWPTKIIYLYISLLAARPKYYFAWTLADAINNAAGFGFRGYDENGAARWDLISNLRIQQIEMSTSFKMFLDNWNIQTALWLKRVCYERTSFSPTIQTFILSAIWHGVYPGYYLTFLTGVLMTLAARAMRNNFRHYFIEPSQLKLFYDVITWIVTQVAISYTVVPFVLLSIKPSLTFYSSWYYCLHILGILVLLLLPVKKTQRRKNTHENIQLSQSKKFDEGENSLGQNSFSTTNNVCNQNQEIASRHSSLKQ</sequence>